<comment type="function">
    <text evidence="1">Required for formation of the 2-thio group of the 5-methoxycarbonylmethyl-2-thiouridine modified base in some tRNAs.</text>
</comment>
<comment type="catalytic activity">
    <reaction>
        <text>2-oxo-3-sulfanylpropanoate + [thioredoxin]-dithiol = [thioredoxin]-disulfide + hydrogen sulfide + pyruvate + H(+)</text>
        <dbReference type="Rhea" id="RHEA:21740"/>
        <dbReference type="Rhea" id="RHEA-COMP:10698"/>
        <dbReference type="Rhea" id="RHEA-COMP:10700"/>
        <dbReference type="ChEBI" id="CHEBI:15361"/>
        <dbReference type="ChEBI" id="CHEBI:15378"/>
        <dbReference type="ChEBI" id="CHEBI:29919"/>
        <dbReference type="ChEBI" id="CHEBI:29950"/>
        <dbReference type="ChEBI" id="CHEBI:50058"/>
        <dbReference type="ChEBI" id="CHEBI:57678"/>
        <dbReference type="EC" id="2.8.1.2"/>
    </reaction>
</comment>
<comment type="subcellular location">
    <subcellularLocation>
        <location evidence="3">Mitochondrion</location>
    </subcellularLocation>
</comment>
<comment type="domain">
    <text evidence="1">Contains two rhodanese domains with different primary structures but with near identical secondary structure conformations suggesting a common evolutionary origin. Only the C-terminal rhodanese domain contains the catalytic cysteine residue (By similarity).</text>
</comment>
<feature type="chain" id="PRO_0000139401" description="Probable 3-mercaptopyruvate sulfurtransferase">
    <location>
        <begin position="1"/>
        <end position="298"/>
    </location>
</feature>
<feature type="domain" description="Rhodanese 1" evidence="2">
    <location>
        <begin position="24"/>
        <end position="141"/>
    </location>
</feature>
<feature type="domain" description="Rhodanese 2" evidence="2">
    <location>
        <begin position="176"/>
        <end position="292"/>
    </location>
</feature>
<feature type="region of interest" description="Hinge">
    <location>
        <begin position="142"/>
        <end position="175"/>
    </location>
</feature>
<feature type="active site" description="Cysteine persulfide intermediate" evidence="2">
    <location>
        <position position="252"/>
    </location>
</feature>
<feature type="binding site" evidence="1">
    <location>
        <position position="190"/>
    </location>
    <ligand>
        <name>substrate</name>
    </ligand>
</feature>
<feature type="modified residue" description="Phosphoserine" evidence="4">
    <location>
        <position position="164"/>
    </location>
</feature>
<organism>
    <name type="scientific">Schizosaccharomyces pombe (strain 972 / ATCC 24843)</name>
    <name type="common">Fission yeast</name>
    <dbReference type="NCBI Taxonomy" id="284812"/>
    <lineage>
        <taxon>Eukaryota</taxon>
        <taxon>Fungi</taxon>
        <taxon>Dikarya</taxon>
        <taxon>Ascomycota</taxon>
        <taxon>Taphrinomycotina</taxon>
        <taxon>Schizosaccharomycetes</taxon>
        <taxon>Schizosaccharomycetales</taxon>
        <taxon>Schizosaccharomycetaceae</taxon>
        <taxon>Schizosaccharomyces</taxon>
    </lineage>
</organism>
<dbReference type="EC" id="2.8.1.2"/>
<dbReference type="EMBL" id="CU329672">
    <property type="protein sequence ID" value="CAB60675.2"/>
    <property type="molecule type" value="Genomic_DNA"/>
</dbReference>
<dbReference type="PIR" id="T50448">
    <property type="entry name" value="T50448"/>
</dbReference>
<dbReference type="RefSeq" id="XP_001713164.1">
    <property type="nucleotide sequence ID" value="XM_001713112.2"/>
</dbReference>
<dbReference type="SMR" id="Q9USJ1"/>
<dbReference type="BioGRID" id="857852">
    <property type="interactions" value="1"/>
</dbReference>
<dbReference type="FunCoup" id="Q9USJ1">
    <property type="interactions" value="376"/>
</dbReference>
<dbReference type="STRING" id="284812.Q9USJ1"/>
<dbReference type="iPTMnet" id="Q9USJ1"/>
<dbReference type="PaxDb" id="4896-SPCC4B3.01.1"/>
<dbReference type="EnsemblFungi" id="SPCC4B3.01.1">
    <property type="protein sequence ID" value="SPCC4B3.01.1:pep"/>
    <property type="gene ID" value="SPCC4B3.01"/>
</dbReference>
<dbReference type="PomBase" id="SPCC4B3.01">
    <property type="gene designation" value="tum1"/>
</dbReference>
<dbReference type="VEuPathDB" id="FungiDB:SPCC4B3.01"/>
<dbReference type="eggNOG" id="KOG1529">
    <property type="taxonomic scope" value="Eukaryota"/>
</dbReference>
<dbReference type="HOGENOM" id="CLU_031618_3_0_1"/>
<dbReference type="InParanoid" id="Q9USJ1"/>
<dbReference type="OMA" id="NNNWFAS"/>
<dbReference type="PhylomeDB" id="Q9USJ1"/>
<dbReference type="Reactome" id="R-SPO-1614558">
    <property type="pathway name" value="Degradation of cysteine and homocysteine"/>
</dbReference>
<dbReference type="PRO" id="PR:Q9USJ1"/>
<dbReference type="Proteomes" id="UP000002485">
    <property type="component" value="Chromosome III"/>
</dbReference>
<dbReference type="GO" id="GO:0005739">
    <property type="term" value="C:mitochondrion"/>
    <property type="evidence" value="ECO:0007005"/>
    <property type="project" value="PomBase"/>
</dbReference>
<dbReference type="GO" id="GO:0016784">
    <property type="term" value="F:3-mercaptopyruvate sulfurtransferase activity"/>
    <property type="evidence" value="ECO:0000318"/>
    <property type="project" value="GO_Central"/>
</dbReference>
<dbReference type="GO" id="GO:0004792">
    <property type="term" value="F:thiosulfate-cyanide sulfurtransferase activity"/>
    <property type="evidence" value="ECO:0000318"/>
    <property type="project" value="GO_Central"/>
</dbReference>
<dbReference type="GO" id="GO:1990799">
    <property type="term" value="P:mitochondrial tRNA wobble position uridine thiolation"/>
    <property type="evidence" value="ECO:0000266"/>
    <property type="project" value="PomBase"/>
</dbReference>
<dbReference type="CDD" id="cd01448">
    <property type="entry name" value="TST_Repeat_1"/>
    <property type="match status" value="1"/>
</dbReference>
<dbReference type="CDD" id="cd01449">
    <property type="entry name" value="TST_Repeat_2"/>
    <property type="match status" value="1"/>
</dbReference>
<dbReference type="Gene3D" id="3.40.250.10">
    <property type="entry name" value="Rhodanese-like domain"/>
    <property type="match status" value="2"/>
</dbReference>
<dbReference type="InterPro" id="IPR001763">
    <property type="entry name" value="Rhodanese-like_dom"/>
</dbReference>
<dbReference type="InterPro" id="IPR036873">
    <property type="entry name" value="Rhodanese-like_dom_sf"/>
</dbReference>
<dbReference type="InterPro" id="IPR045078">
    <property type="entry name" value="TST/MPST-like"/>
</dbReference>
<dbReference type="PANTHER" id="PTHR11364:SF27">
    <property type="entry name" value="SULFURTRANSFERASE"/>
    <property type="match status" value="1"/>
</dbReference>
<dbReference type="PANTHER" id="PTHR11364">
    <property type="entry name" value="THIOSULFATE SULFERTANSFERASE"/>
    <property type="match status" value="1"/>
</dbReference>
<dbReference type="Pfam" id="PF00581">
    <property type="entry name" value="Rhodanese"/>
    <property type="match status" value="2"/>
</dbReference>
<dbReference type="SMART" id="SM00450">
    <property type="entry name" value="RHOD"/>
    <property type="match status" value="2"/>
</dbReference>
<dbReference type="SUPFAM" id="SSF52821">
    <property type="entry name" value="Rhodanese/Cell cycle control phosphatase"/>
    <property type="match status" value="2"/>
</dbReference>
<dbReference type="PROSITE" id="PS50206">
    <property type="entry name" value="RHODANESE_3"/>
    <property type="match status" value="2"/>
</dbReference>
<keyword id="KW-0496">Mitochondrion</keyword>
<keyword id="KW-0597">Phosphoprotein</keyword>
<keyword id="KW-1185">Reference proteome</keyword>
<keyword id="KW-0677">Repeat</keyword>
<keyword id="KW-0808">Transferase</keyword>
<gene>
    <name type="primary">tum1</name>
    <name type="ORF">SPCC4B3.01</name>
    <name type="ORF">SPCP25A2.01c</name>
</gene>
<name>THTM_SCHPO</name>
<accession>Q9USJ1</accession>
<accession>Q9URT3</accession>
<protein>
    <recommendedName>
        <fullName>Probable 3-mercaptopyruvate sulfurtransferase</fullName>
        <shortName>MST</shortName>
        <ecNumber>2.8.1.2</ecNumber>
    </recommendedName>
</protein>
<reference key="1">
    <citation type="journal article" date="2002" name="Nature">
        <title>The genome sequence of Schizosaccharomyces pombe.</title>
        <authorList>
            <person name="Wood V."/>
            <person name="Gwilliam R."/>
            <person name="Rajandream M.A."/>
            <person name="Lyne M.H."/>
            <person name="Lyne R."/>
            <person name="Stewart A."/>
            <person name="Sgouros J.G."/>
            <person name="Peat N."/>
            <person name="Hayles J."/>
            <person name="Baker S.G."/>
            <person name="Basham D."/>
            <person name="Bowman S."/>
            <person name="Brooks K."/>
            <person name="Brown D."/>
            <person name="Brown S."/>
            <person name="Chillingworth T."/>
            <person name="Churcher C.M."/>
            <person name="Collins M."/>
            <person name="Connor R."/>
            <person name="Cronin A."/>
            <person name="Davis P."/>
            <person name="Feltwell T."/>
            <person name="Fraser A."/>
            <person name="Gentles S."/>
            <person name="Goble A."/>
            <person name="Hamlin N."/>
            <person name="Harris D.E."/>
            <person name="Hidalgo J."/>
            <person name="Hodgson G."/>
            <person name="Holroyd S."/>
            <person name="Hornsby T."/>
            <person name="Howarth S."/>
            <person name="Huckle E.J."/>
            <person name="Hunt S."/>
            <person name="Jagels K."/>
            <person name="James K.D."/>
            <person name="Jones L."/>
            <person name="Jones M."/>
            <person name="Leather S."/>
            <person name="McDonald S."/>
            <person name="McLean J."/>
            <person name="Mooney P."/>
            <person name="Moule S."/>
            <person name="Mungall K.L."/>
            <person name="Murphy L.D."/>
            <person name="Niblett D."/>
            <person name="Odell C."/>
            <person name="Oliver K."/>
            <person name="O'Neil S."/>
            <person name="Pearson D."/>
            <person name="Quail M.A."/>
            <person name="Rabbinowitsch E."/>
            <person name="Rutherford K.M."/>
            <person name="Rutter S."/>
            <person name="Saunders D."/>
            <person name="Seeger K."/>
            <person name="Sharp S."/>
            <person name="Skelton J."/>
            <person name="Simmonds M.N."/>
            <person name="Squares R."/>
            <person name="Squares S."/>
            <person name="Stevens K."/>
            <person name="Taylor K."/>
            <person name="Taylor R.G."/>
            <person name="Tivey A."/>
            <person name="Walsh S.V."/>
            <person name="Warren T."/>
            <person name="Whitehead S."/>
            <person name="Woodward J.R."/>
            <person name="Volckaert G."/>
            <person name="Aert R."/>
            <person name="Robben J."/>
            <person name="Grymonprez B."/>
            <person name="Weltjens I."/>
            <person name="Vanstreels E."/>
            <person name="Rieger M."/>
            <person name="Schaefer M."/>
            <person name="Mueller-Auer S."/>
            <person name="Gabel C."/>
            <person name="Fuchs M."/>
            <person name="Duesterhoeft A."/>
            <person name="Fritzc C."/>
            <person name="Holzer E."/>
            <person name="Moestl D."/>
            <person name="Hilbert H."/>
            <person name="Borzym K."/>
            <person name="Langer I."/>
            <person name="Beck A."/>
            <person name="Lehrach H."/>
            <person name="Reinhardt R."/>
            <person name="Pohl T.M."/>
            <person name="Eger P."/>
            <person name="Zimmermann W."/>
            <person name="Wedler H."/>
            <person name="Wambutt R."/>
            <person name="Purnelle B."/>
            <person name="Goffeau A."/>
            <person name="Cadieu E."/>
            <person name="Dreano S."/>
            <person name="Gloux S."/>
            <person name="Lelaure V."/>
            <person name="Mottier S."/>
            <person name="Galibert F."/>
            <person name="Aves S.J."/>
            <person name="Xiang Z."/>
            <person name="Hunt C."/>
            <person name="Moore K."/>
            <person name="Hurst S.M."/>
            <person name="Lucas M."/>
            <person name="Rochet M."/>
            <person name="Gaillardin C."/>
            <person name="Tallada V.A."/>
            <person name="Garzon A."/>
            <person name="Thode G."/>
            <person name="Daga R.R."/>
            <person name="Cruzado L."/>
            <person name="Jimenez J."/>
            <person name="Sanchez M."/>
            <person name="del Rey F."/>
            <person name="Benito J."/>
            <person name="Dominguez A."/>
            <person name="Revuelta J.L."/>
            <person name="Moreno S."/>
            <person name="Armstrong J."/>
            <person name="Forsburg S.L."/>
            <person name="Cerutti L."/>
            <person name="Lowe T."/>
            <person name="McCombie W.R."/>
            <person name="Paulsen I."/>
            <person name="Potashkin J."/>
            <person name="Shpakovski G.V."/>
            <person name="Ussery D."/>
            <person name="Barrell B.G."/>
            <person name="Nurse P."/>
        </authorList>
    </citation>
    <scope>NUCLEOTIDE SEQUENCE [LARGE SCALE GENOMIC DNA]</scope>
    <source>
        <strain>972 / ATCC 24843</strain>
    </source>
</reference>
<reference key="2">
    <citation type="journal article" date="2006" name="Nat. Biotechnol.">
        <title>ORFeome cloning and global analysis of protein localization in the fission yeast Schizosaccharomyces pombe.</title>
        <authorList>
            <person name="Matsuyama A."/>
            <person name="Arai R."/>
            <person name="Yashiroda Y."/>
            <person name="Shirai A."/>
            <person name="Kamata A."/>
            <person name="Sekido S."/>
            <person name="Kobayashi Y."/>
            <person name="Hashimoto A."/>
            <person name="Hamamoto M."/>
            <person name="Hiraoka Y."/>
            <person name="Horinouchi S."/>
            <person name="Yoshida M."/>
        </authorList>
    </citation>
    <scope>SUBCELLULAR LOCATION [LARGE SCALE ANALYSIS]</scope>
</reference>
<reference key="3">
    <citation type="journal article" date="2008" name="J. Proteome Res.">
        <title>Phosphoproteome analysis of fission yeast.</title>
        <authorList>
            <person name="Wilson-Grady J.T."/>
            <person name="Villen J."/>
            <person name="Gygi S.P."/>
        </authorList>
    </citation>
    <scope>PHOSPHORYLATION [LARGE SCALE ANALYSIS] AT SER-164</scope>
    <scope>IDENTIFICATION BY MASS SPECTROMETRY</scope>
</reference>
<proteinExistence type="evidence at protein level"/>
<evidence type="ECO:0000250" key="1"/>
<evidence type="ECO:0000255" key="2">
    <source>
        <dbReference type="PROSITE-ProRule" id="PRU00173"/>
    </source>
</evidence>
<evidence type="ECO:0000269" key="3">
    <source>
    </source>
</evidence>
<evidence type="ECO:0000269" key="4">
    <source>
    </source>
</evidence>
<sequence length="298" mass="32800">MFSVGKKISFILPIKGVLQKLKDNAQKTVLLDATWYLPTDTKNGKKEYLESRLPGAQYFDIDEAKDHKNPLPHMLPPADEFASYVGKLGIDRNTNVIIYDRKGFFSSPRVFWTFKVFGHEHVFLFPNAFNAWKTEGLELETGEPRTPKPVVYEGAKLNKDLVASFDDIVKVIESPDAAGVHIVDARAHERFLGNVPESRPGLASGHIPTSINIPFTETTAAGITAPKPEEDLEKVFSSHGLTDKSVPIITSCGSGVTASVLFAALKECGFKDVRVYDESWSGYGKRANEDSSLLATGP</sequence>